<proteinExistence type="inferred from homology"/>
<comment type="function">
    <text evidence="1">An essential GTPase which binds GTP, GDP and possibly (p)ppGpp with moderate affinity, with high nucleotide exchange rates and a fairly low GTP hydrolysis rate. Plays a role in control of the cell cycle, stress response, ribosome biogenesis and in those bacteria that undergo differentiation, in morphogenesis control.</text>
</comment>
<comment type="cofactor">
    <cofactor evidence="1">
        <name>Mg(2+)</name>
        <dbReference type="ChEBI" id="CHEBI:18420"/>
    </cofactor>
</comment>
<comment type="subunit">
    <text evidence="1">Monomer.</text>
</comment>
<comment type="subcellular location">
    <subcellularLocation>
        <location evidence="1">Cytoplasm</location>
    </subcellularLocation>
</comment>
<comment type="similarity">
    <text evidence="1">Belongs to the TRAFAC class OBG-HflX-like GTPase superfamily. OBG GTPase family.</text>
</comment>
<evidence type="ECO:0000255" key="1">
    <source>
        <dbReference type="HAMAP-Rule" id="MF_01454"/>
    </source>
</evidence>
<evidence type="ECO:0000255" key="2">
    <source>
        <dbReference type="PROSITE-ProRule" id="PRU01231"/>
    </source>
</evidence>
<name>OBG_METRJ</name>
<accession>B1M697</accession>
<organism>
    <name type="scientific">Methylobacterium radiotolerans (strain ATCC 27329 / DSM 1819 / JCM 2831 / NBRC 15690 / NCIMB 10815 / 0-1)</name>
    <dbReference type="NCBI Taxonomy" id="426355"/>
    <lineage>
        <taxon>Bacteria</taxon>
        <taxon>Pseudomonadati</taxon>
        <taxon>Pseudomonadota</taxon>
        <taxon>Alphaproteobacteria</taxon>
        <taxon>Hyphomicrobiales</taxon>
        <taxon>Methylobacteriaceae</taxon>
        <taxon>Methylobacterium</taxon>
    </lineage>
</organism>
<protein>
    <recommendedName>
        <fullName evidence="1">GTPase Obg</fullName>
        <ecNumber evidence="1">3.6.5.-</ecNumber>
    </recommendedName>
    <alternativeName>
        <fullName evidence="1">GTP-binding protein Obg</fullName>
    </alternativeName>
</protein>
<gene>
    <name evidence="1" type="primary">obg</name>
    <name type="ordered locus">Mrad2831_0105</name>
</gene>
<feature type="chain" id="PRO_0000386043" description="GTPase Obg">
    <location>
        <begin position="1"/>
        <end position="342"/>
    </location>
</feature>
<feature type="domain" description="Obg" evidence="2">
    <location>
        <begin position="1"/>
        <end position="159"/>
    </location>
</feature>
<feature type="domain" description="OBG-type G" evidence="1">
    <location>
        <begin position="160"/>
        <end position="327"/>
    </location>
</feature>
<feature type="binding site" evidence="1">
    <location>
        <begin position="166"/>
        <end position="173"/>
    </location>
    <ligand>
        <name>GTP</name>
        <dbReference type="ChEBI" id="CHEBI:37565"/>
    </ligand>
</feature>
<feature type="binding site" evidence="1">
    <location>
        <position position="173"/>
    </location>
    <ligand>
        <name>Mg(2+)</name>
        <dbReference type="ChEBI" id="CHEBI:18420"/>
    </ligand>
</feature>
<feature type="binding site" evidence="1">
    <location>
        <begin position="191"/>
        <end position="195"/>
    </location>
    <ligand>
        <name>GTP</name>
        <dbReference type="ChEBI" id="CHEBI:37565"/>
    </ligand>
</feature>
<feature type="binding site" evidence="1">
    <location>
        <position position="193"/>
    </location>
    <ligand>
        <name>Mg(2+)</name>
        <dbReference type="ChEBI" id="CHEBI:18420"/>
    </ligand>
</feature>
<feature type="binding site" evidence="1">
    <location>
        <begin position="212"/>
        <end position="215"/>
    </location>
    <ligand>
        <name>GTP</name>
        <dbReference type="ChEBI" id="CHEBI:37565"/>
    </ligand>
</feature>
<feature type="binding site" evidence="1">
    <location>
        <begin position="279"/>
        <end position="282"/>
    </location>
    <ligand>
        <name>GTP</name>
        <dbReference type="ChEBI" id="CHEBI:37565"/>
    </ligand>
</feature>
<feature type="binding site" evidence="1">
    <location>
        <begin position="308"/>
        <end position="310"/>
    </location>
    <ligand>
        <name>GTP</name>
        <dbReference type="ChEBI" id="CHEBI:37565"/>
    </ligand>
</feature>
<dbReference type="EC" id="3.6.5.-" evidence="1"/>
<dbReference type="EMBL" id="CP001001">
    <property type="protein sequence ID" value="ACB22132.1"/>
    <property type="molecule type" value="Genomic_DNA"/>
</dbReference>
<dbReference type="SMR" id="B1M697"/>
<dbReference type="STRING" id="426355.Mrad2831_0105"/>
<dbReference type="GeneID" id="6136405"/>
<dbReference type="KEGG" id="mrd:Mrad2831_0105"/>
<dbReference type="eggNOG" id="COG0536">
    <property type="taxonomic scope" value="Bacteria"/>
</dbReference>
<dbReference type="HOGENOM" id="CLU_011747_2_0_5"/>
<dbReference type="OrthoDB" id="9807318at2"/>
<dbReference type="Proteomes" id="UP000006589">
    <property type="component" value="Chromosome"/>
</dbReference>
<dbReference type="GO" id="GO:0005737">
    <property type="term" value="C:cytoplasm"/>
    <property type="evidence" value="ECO:0007669"/>
    <property type="project" value="UniProtKB-SubCell"/>
</dbReference>
<dbReference type="GO" id="GO:0005525">
    <property type="term" value="F:GTP binding"/>
    <property type="evidence" value="ECO:0007669"/>
    <property type="project" value="UniProtKB-UniRule"/>
</dbReference>
<dbReference type="GO" id="GO:0003924">
    <property type="term" value="F:GTPase activity"/>
    <property type="evidence" value="ECO:0007669"/>
    <property type="project" value="UniProtKB-UniRule"/>
</dbReference>
<dbReference type="GO" id="GO:0000287">
    <property type="term" value="F:magnesium ion binding"/>
    <property type="evidence" value="ECO:0007669"/>
    <property type="project" value="InterPro"/>
</dbReference>
<dbReference type="GO" id="GO:0042254">
    <property type="term" value="P:ribosome biogenesis"/>
    <property type="evidence" value="ECO:0007669"/>
    <property type="project" value="UniProtKB-UniRule"/>
</dbReference>
<dbReference type="CDD" id="cd01898">
    <property type="entry name" value="Obg"/>
    <property type="match status" value="1"/>
</dbReference>
<dbReference type="FunFam" id="2.70.210.12:FF:000001">
    <property type="entry name" value="GTPase Obg"/>
    <property type="match status" value="1"/>
</dbReference>
<dbReference type="Gene3D" id="2.70.210.12">
    <property type="entry name" value="GTP1/OBG domain"/>
    <property type="match status" value="1"/>
</dbReference>
<dbReference type="Gene3D" id="3.40.50.300">
    <property type="entry name" value="P-loop containing nucleotide triphosphate hydrolases"/>
    <property type="match status" value="1"/>
</dbReference>
<dbReference type="HAMAP" id="MF_01454">
    <property type="entry name" value="GTPase_Obg"/>
    <property type="match status" value="1"/>
</dbReference>
<dbReference type="InterPro" id="IPR031167">
    <property type="entry name" value="G_OBG"/>
</dbReference>
<dbReference type="InterPro" id="IPR006073">
    <property type="entry name" value="GTP-bd"/>
</dbReference>
<dbReference type="InterPro" id="IPR014100">
    <property type="entry name" value="GTP-bd_Obg/CgtA"/>
</dbReference>
<dbReference type="InterPro" id="IPR006074">
    <property type="entry name" value="GTP1-OBG_CS"/>
</dbReference>
<dbReference type="InterPro" id="IPR006169">
    <property type="entry name" value="GTP1_OBG_dom"/>
</dbReference>
<dbReference type="InterPro" id="IPR036726">
    <property type="entry name" value="GTP1_OBG_dom_sf"/>
</dbReference>
<dbReference type="InterPro" id="IPR045086">
    <property type="entry name" value="OBG_GTPase"/>
</dbReference>
<dbReference type="InterPro" id="IPR027417">
    <property type="entry name" value="P-loop_NTPase"/>
</dbReference>
<dbReference type="NCBIfam" id="TIGR02729">
    <property type="entry name" value="Obg_CgtA"/>
    <property type="match status" value="1"/>
</dbReference>
<dbReference type="NCBIfam" id="NF008955">
    <property type="entry name" value="PRK12297.1"/>
    <property type="match status" value="1"/>
</dbReference>
<dbReference type="NCBIfam" id="NF008956">
    <property type="entry name" value="PRK12299.1"/>
    <property type="match status" value="1"/>
</dbReference>
<dbReference type="PANTHER" id="PTHR11702">
    <property type="entry name" value="DEVELOPMENTALLY REGULATED GTP-BINDING PROTEIN-RELATED"/>
    <property type="match status" value="1"/>
</dbReference>
<dbReference type="PANTHER" id="PTHR11702:SF31">
    <property type="entry name" value="MITOCHONDRIAL RIBOSOME-ASSOCIATED GTPASE 2"/>
    <property type="match status" value="1"/>
</dbReference>
<dbReference type="Pfam" id="PF01018">
    <property type="entry name" value="GTP1_OBG"/>
    <property type="match status" value="1"/>
</dbReference>
<dbReference type="Pfam" id="PF01926">
    <property type="entry name" value="MMR_HSR1"/>
    <property type="match status" value="1"/>
</dbReference>
<dbReference type="PIRSF" id="PIRSF002401">
    <property type="entry name" value="GTP_bd_Obg/CgtA"/>
    <property type="match status" value="1"/>
</dbReference>
<dbReference type="PRINTS" id="PR00326">
    <property type="entry name" value="GTP1OBG"/>
</dbReference>
<dbReference type="SUPFAM" id="SSF82051">
    <property type="entry name" value="Obg GTP-binding protein N-terminal domain"/>
    <property type="match status" value="1"/>
</dbReference>
<dbReference type="SUPFAM" id="SSF52540">
    <property type="entry name" value="P-loop containing nucleoside triphosphate hydrolases"/>
    <property type="match status" value="1"/>
</dbReference>
<dbReference type="PROSITE" id="PS51710">
    <property type="entry name" value="G_OBG"/>
    <property type="match status" value="1"/>
</dbReference>
<dbReference type="PROSITE" id="PS00905">
    <property type="entry name" value="GTP1_OBG"/>
    <property type="match status" value="1"/>
</dbReference>
<dbReference type="PROSITE" id="PS51883">
    <property type="entry name" value="OBG"/>
    <property type="match status" value="1"/>
</dbReference>
<reference key="1">
    <citation type="submission" date="2008-03" db="EMBL/GenBank/DDBJ databases">
        <title>Complete sequence of chromosome of Methylobacterium radiotolerans JCM 2831.</title>
        <authorList>
            <consortium name="US DOE Joint Genome Institute"/>
            <person name="Copeland A."/>
            <person name="Lucas S."/>
            <person name="Lapidus A."/>
            <person name="Glavina del Rio T."/>
            <person name="Dalin E."/>
            <person name="Tice H."/>
            <person name="Bruce D."/>
            <person name="Goodwin L."/>
            <person name="Pitluck S."/>
            <person name="Kiss H."/>
            <person name="Brettin T."/>
            <person name="Detter J.C."/>
            <person name="Han C."/>
            <person name="Kuske C.R."/>
            <person name="Schmutz J."/>
            <person name="Larimer F."/>
            <person name="Land M."/>
            <person name="Hauser L."/>
            <person name="Kyrpides N."/>
            <person name="Mikhailova N."/>
            <person name="Marx C.J."/>
            <person name="Richardson P."/>
        </authorList>
    </citation>
    <scope>NUCLEOTIDE SEQUENCE [LARGE SCALE GENOMIC DNA]</scope>
    <source>
        <strain>ATCC 27329 / DSM 1819 / JCM 2831 / NBRC 15690 / NCIMB 10815 / 0-1</strain>
    </source>
</reference>
<sequence length="342" mass="36326">MKFLDEAKVYVRSGDGGPGCVSFRREKFIEFGGPNGGDGGRGGDVWVECVEGLNTLIDYRYQQHFKAKKGEHGMGSNCHGANGADTVLKVPAGTQIFSEDGETLLADLTEVGQKIRLAKGGNGGFGNAYFTTSTNRAPKHANPGQEGQEMWIWLRLKLIADAGLVGLPNAGKSTFLASVTAAKPKIADYPFTTLHPGLGVVRSDGREFVLADIPGLIEGAHEGVGLGDKFLAHVERCRVLLHLVDGTSEHAGKTYKLVRGEIEAYGNGLAEKPEIVALSKADALDADTLKSQVAKLKRAAGRAPLILSSASRKGVPEALRALQTEIDASAEAERKPVAAWQP</sequence>
<keyword id="KW-0963">Cytoplasm</keyword>
<keyword id="KW-0342">GTP-binding</keyword>
<keyword id="KW-0378">Hydrolase</keyword>
<keyword id="KW-0460">Magnesium</keyword>
<keyword id="KW-0479">Metal-binding</keyword>
<keyword id="KW-0547">Nucleotide-binding</keyword>